<gene>
    <name evidence="1" type="primary">mukF</name>
    <name type="ordered locus">HS_0864</name>
</gene>
<protein>
    <recommendedName>
        <fullName evidence="1">Chromosome partition protein MukF</fullName>
    </recommendedName>
</protein>
<keyword id="KW-0106">Calcium</keyword>
<keyword id="KW-0131">Cell cycle</keyword>
<keyword id="KW-0132">Cell division</keyword>
<keyword id="KW-0159">Chromosome partition</keyword>
<keyword id="KW-0963">Cytoplasm</keyword>
<keyword id="KW-0226">DNA condensation</keyword>
<feature type="chain" id="PRO_1000069934" description="Chromosome partition protein MukF">
    <location>
        <begin position="1"/>
        <end position="440"/>
    </location>
</feature>
<feature type="region of interest" description="Leucine-zipper">
    <location>
        <begin position="208"/>
        <end position="236"/>
    </location>
</feature>
<sequence length="440" mass="51240">MLETSQTIPELVNWTREREFSLSLSTERLAFLLAIAIYNNERLDGEMLETDLIDIFRHISNTFEQSAETISTRANNSINELVKQRFLNRFSSEFTEGLSIYRLTPLGVGVSDYYIRQREFSALRLSVQLSIVADEIQRASEAAEEGGDEHYWRKNVFAPLKYSVAEIFDSIDLSQRMMDENQQHIKEEIAELLTKDWQTAIASCERLLDETSGNLRELQDTLNAAGDKLQSQLLRIQDCVIGHDNLYFVEQLIVDLQAKLDRIISWGQQAIDLWIGYDRHVHKFIRTAIDLDKNRVFSQRLRQSIHHYFDHPWFLWIAQAERLIDLREEELTLREEEALGELPEELQYESLADLHEQIVETMQSLLIEYRLQNTPIDLSEVLTAQLKQYPLAKHFDIARIIIDQAVRLGLAQDDLNGIYPNWRSINENGAEVQAHVIDKY</sequence>
<proteinExistence type="inferred from homology"/>
<dbReference type="EMBL" id="CP000436">
    <property type="protein sequence ID" value="ABI25139.1"/>
    <property type="molecule type" value="Genomic_DNA"/>
</dbReference>
<dbReference type="SMR" id="Q0I3K2"/>
<dbReference type="KEGG" id="hso:HS_0864"/>
<dbReference type="eggNOG" id="COG3006">
    <property type="taxonomic scope" value="Bacteria"/>
</dbReference>
<dbReference type="HOGENOM" id="CLU_049853_0_0_6"/>
<dbReference type="GO" id="GO:0005737">
    <property type="term" value="C:cytoplasm"/>
    <property type="evidence" value="ECO:0007669"/>
    <property type="project" value="UniProtKB-UniRule"/>
</dbReference>
<dbReference type="GO" id="GO:0009295">
    <property type="term" value="C:nucleoid"/>
    <property type="evidence" value="ECO:0007669"/>
    <property type="project" value="UniProtKB-SubCell"/>
</dbReference>
<dbReference type="GO" id="GO:0005509">
    <property type="term" value="F:calcium ion binding"/>
    <property type="evidence" value="ECO:0007669"/>
    <property type="project" value="UniProtKB-UniRule"/>
</dbReference>
<dbReference type="GO" id="GO:0051301">
    <property type="term" value="P:cell division"/>
    <property type="evidence" value="ECO:0007669"/>
    <property type="project" value="UniProtKB-KW"/>
</dbReference>
<dbReference type="GO" id="GO:0030261">
    <property type="term" value="P:chromosome condensation"/>
    <property type="evidence" value="ECO:0007669"/>
    <property type="project" value="UniProtKB-KW"/>
</dbReference>
<dbReference type="GO" id="GO:0007059">
    <property type="term" value="P:chromosome segregation"/>
    <property type="evidence" value="ECO:0007669"/>
    <property type="project" value="UniProtKB-UniRule"/>
</dbReference>
<dbReference type="GO" id="GO:0006260">
    <property type="term" value="P:DNA replication"/>
    <property type="evidence" value="ECO:0007669"/>
    <property type="project" value="UniProtKB-UniRule"/>
</dbReference>
<dbReference type="CDD" id="cd16337">
    <property type="entry name" value="MukF_C"/>
    <property type="match status" value="1"/>
</dbReference>
<dbReference type="CDD" id="cd16335">
    <property type="entry name" value="MukF_N"/>
    <property type="match status" value="1"/>
</dbReference>
<dbReference type="Gene3D" id="1.20.58.590">
    <property type="entry name" value="Chromosome partition protein MukF, middle domain"/>
    <property type="match status" value="1"/>
</dbReference>
<dbReference type="Gene3D" id="1.10.225.40">
    <property type="entry name" value="MukF, C-terminal domain"/>
    <property type="match status" value="1"/>
</dbReference>
<dbReference type="Gene3D" id="1.10.10.10">
    <property type="entry name" value="Winged helix-like DNA-binding domain superfamily/Winged helix DNA-binding domain"/>
    <property type="match status" value="1"/>
</dbReference>
<dbReference type="HAMAP" id="MF_01803">
    <property type="entry name" value="MukF"/>
    <property type="match status" value="1"/>
</dbReference>
<dbReference type="InterPro" id="IPR005582">
    <property type="entry name" value="Chromosome_partition_MukF"/>
</dbReference>
<dbReference type="InterPro" id="IPR033441">
    <property type="entry name" value="MukF_C"/>
</dbReference>
<dbReference type="InterPro" id="IPR038198">
    <property type="entry name" value="MukF_C_sf"/>
</dbReference>
<dbReference type="InterPro" id="IPR033440">
    <property type="entry name" value="MukF_M"/>
</dbReference>
<dbReference type="InterPro" id="IPR036141">
    <property type="entry name" value="MukF_M_sp"/>
</dbReference>
<dbReference type="InterPro" id="IPR033439">
    <property type="entry name" value="MukF_WHTH"/>
</dbReference>
<dbReference type="InterPro" id="IPR036388">
    <property type="entry name" value="WH-like_DNA-bd_sf"/>
</dbReference>
<dbReference type="InterPro" id="IPR036390">
    <property type="entry name" value="WH_DNA-bd_sf"/>
</dbReference>
<dbReference type="NCBIfam" id="NF003615">
    <property type="entry name" value="PRK05260.1"/>
    <property type="match status" value="1"/>
</dbReference>
<dbReference type="Pfam" id="PF03882">
    <property type="entry name" value="KicB"/>
    <property type="match status" value="1"/>
</dbReference>
<dbReference type="Pfam" id="PF17193">
    <property type="entry name" value="MukF_C"/>
    <property type="match status" value="1"/>
</dbReference>
<dbReference type="Pfam" id="PF17192">
    <property type="entry name" value="MukF_M"/>
    <property type="match status" value="1"/>
</dbReference>
<dbReference type="PIRSF" id="PIRSF018282">
    <property type="entry name" value="MukF"/>
    <property type="match status" value="1"/>
</dbReference>
<dbReference type="SUPFAM" id="SSF140570">
    <property type="entry name" value="MukF C-terminal domain-like"/>
    <property type="match status" value="1"/>
</dbReference>
<dbReference type="SUPFAM" id="SSF46785">
    <property type="entry name" value="Winged helix' DNA-binding domain"/>
    <property type="match status" value="1"/>
</dbReference>
<organism>
    <name type="scientific">Histophilus somni (strain 129Pt)</name>
    <name type="common">Haemophilus somnus</name>
    <dbReference type="NCBI Taxonomy" id="205914"/>
    <lineage>
        <taxon>Bacteria</taxon>
        <taxon>Pseudomonadati</taxon>
        <taxon>Pseudomonadota</taxon>
        <taxon>Gammaproteobacteria</taxon>
        <taxon>Pasteurellales</taxon>
        <taxon>Pasteurellaceae</taxon>
        <taxon>Histophilus</taxon>
    </lineage>
</organism>
<comment type="function">
    <text evidence="1">Involved in chromosome condensation, segregation and cell cycle progression. May participate in facilitating chromosome segregation by condensation DNA from both sides of a centrally located replisome during cell division. Not required for mini-F plasmid partitioning. Probably acts via its interaction with MukB and MukE. Overexpression results in anucleate cells. It has a calcium binding activity.</text>
</comment>
<comment type="subunit">
    <text evidence="1">Interacts, and probably forms a ternary complex, with MukE and MukB via its C-terminal region. The complex formation is stimulated by calcium or magnesium. It is required for an interaction between MukE and MukB.</text>
</comment>
<comment type="subcellular location">
    <subcellularLocation>
        <location evidence="1">Cytoplasm</location>
        <location evidence="1">Nucleoid</location>
    </subcellularLocation>
    <text evidence="1">Restricted to the nucleoid region.</text>
</comment>
<comment type="similarity">
    <text evidence="1">Belongs to the MukF family.</text>
</comment>
<reference key="1">
    <citation type="journal article" date="2007" name="J. Bacteriol.">
        <title>Complete genome sequence of Haemophilus somnus (Histophilus somni) strain 129Pt and comparison to Haemophilus ducreyi 35000HP and Haemophilus influenzae Rd.</title>
        <authorList>
            <person name="Challacombe J.F."/>
            <person name="Duncan A.J."/>
            <person name="Brettin T.S."/>
            <person name="Bruce D."/>
            <person name="Chertkov O."/>
            <person name="Detter J.C."/>
            <person name="Han C.S."/>
            <person name="Misra M."/>
            <person name="Richardson P."/>
            <person name="Tapia R."/>
            <person name="Thayer N."/>
            <person name="Xie G."/>
            <person name="Inzana T.J."/>
        </authorList>
    </citation>
    <scope>NUCLEOTIDE SEQUENCE [LARGE SCALE GENOMIC DNA]</scope>
    <source>
        <strain>129Pt</strain>
    </source>
</reference>
<name>MUKF_HISS1</name>
<evidence type="ECO:0000255" key="1">
    <source>
        <dbReference type="HAMAP-Rule" id="MF_01803"/>
    </source>
</evidence>
<accession>Q0I3K2</accession>